<comment type="function">
    <text evidence="4 5 6 7">Receptor for the leucine-rich nuclear export signal (NES). Binds cooperatively to the NES on its target protein and to the small GTPase Ran in its active GTP-bound form (PubMed:10652141, PubMed:16766674). Required for the maternal-to-embryonic transition and during gametophyte development (PubMed:18791220). Involved in heat-induced oxidative stress basal resistance (PubMed:20345641).</text>
</comment>
<comment type="subunit">
    <text evidence="4">Interacts with RAN1.</text>
</comment>
<comment type="subcellular location">
    <subcellularLocation>
        <location evidence="1">Nucleus</location>
        <location evidence="1">Nuclear pore complex</location>
    </subcellularLocation>
    <subcellularLocation>
        <location evidence="1">Nucleus membrane</location>
        <topology evidence="1">Peripheral membrane protein</topology>
        <orientation evidence="1">Nucleoplasmic side</orientation>
    </subcellularLocation>
</comment>
<comment type="alternative products">
    <event type="alternative splicing"/>
    <isoform>
        <id>Q9SMV6-1</id>
        <name>1</name>
        <sequence type="displayed"/>
    </isoform>
    <isoform>
        <id>Q9SMV6-2</id>
        <name>2</name>
        <sequence type="described" ref="VSP_057489"/>
    </isoform>
</comment>
<comment type="tissue specificity">
    <text evidence="4 6 7">Expressed ubiquitously, with higher levels in stems, inflorescences and roots (PubMed:10652141, PubMed:20345641). Present in mature pollen grains, unpollinated pistils, and 2-week-old seedlings (PubMed:18791220).</text>
</comment>
<comment type="disruption phenotype">
    <text evidence="6 7">Gametophyte defective when both XPO1A and XPO1B are disrupted. Abnormal pollen germination and tube growth, impaired female gametophyte development and embryo lethal (PubMed:18791220). Impaired ability to withstand moderate heat stress (37 degrees Celsius). Enhanced sensitivity to methyl viologen (MV)-induced oxidative stress (PubMed:20345641).</text>
</comment>
<comment type="similarity">
    <text evidence="11">Belongs to the exportin family.</text>
</comment>
<dbReference type="EMBL" id="Y18469">
    <property type="protein sequence ID" value="CAB89280.1"/>
    <property type="molecule type" value="mRNA"/>
</dbReference>
<dbReference type="EMBL" id="Y18470">
    <property type="protein sequence ID" value="CAB56597.1"/>
    <property type="molecule type" value="Genomic_DNA"/>
</dbReference>
<dbReference type="EMBL" id="AL391141">
    <property type="protein sequence ID" value="CAC01715.1"/>
    <property type="molecule type" value="Genomic_DNA"/>
</dbReference>
<dbReference type="EMBL" id="CP002688">
    <property type="protein sequence ID" value="AED92373.1"/>
    <property type="molecule type" value="Genomic_DNA"/>
</dbReference>
<dbReference type="EMBL" id="CP002688">
    <property type="protein sequence ID" value="AED92374.1"/>
    <property type="molecule type" value="Genomic_DNA"/>
</dbReference>
<dbReference type="EMBL" id="AY056126">
    <property type="protein sequence ID" value="AAL07205.1"/>
    <property type="molecule type" value="mRNA"/>
</dbReference>
<dbReference type="EMBL" id="AY096633">
    <property type="protein sequence ID" value="AAM20283.1"/>
    <property type="molecule type" value="mRNA"/>
</dbReference>
<dbReference type="PIR" id="T51557">
    <property type="entry name" value="T51557"/>
</dbReference>
<dbReference type="PIR" id="T52638">
    <property type="entry name" value="T52638"/>
</dbReference>
<dbReference type="RefSeq" id="NP_001190324.1">
    <molecule id="Q9SMV6-2"/>
    <property type="nucleotide sequence ID" value="NM_001203395.1"/>
</dbReference>
<dbReference type="RefSeq" id="NP_197204.1">
    <molecule id="Q9SMV6-1"/>
    <property type="nucleotide sequence ID" value="NM_121708.3"/>
</dbReference>
<dbReference type="SMR" id="Q9SMV6"/>
<dbReference type="FunCoup" id="Q9SMV6">
    <property type="interactions" value="5423"/>
</dbReference>
<dbReference type="IntAct" id="Q9SMV6">
    <property type="interactions" value="2"/>
</dbReference>
<dbReference type="STRING" id="3702.Q9SMV6"/>
<dbReference type="iPTMnet" id="Q9SMV6"/>
<dbReference type="PaxDb" id="3702-AT5G17020.1"/>
<dbReference type="ProMEX" id="Q9SMV6"/>
<dbReference type="ProteomicsDB" id="242512">
    <molecule id="Q9SMV6-1"/>
</dbReference>
<dbReference type="EnsemblPlants" id="AT5G17020.1">
    <molecule id="Q9SMV6-1"/>
    <property type="protein sequence ID" value="AT5G17020.1"/>
    <property type="gene ID" value="AT5G17020"/>
</dbReference>
<dbReference type="EnsemblPlants" id="AT5G17020.2">
    <molecule id="Q9SMV6-2"/>
    <property type="protein sequence ID" value="AT5G17020.2"/>
    <property type="gene ID" value="AT5G17020"/>
</dbReference>
<dbReference type="GeneID" id="831565"/>
<dbReference type="Gramene" id="AT5G17020.1">
    <molecule id="Q9SMV6-1"/>
    <property type="protein sequence ID" value="AT5G17020.1"/>
    <property type="gene ID" value="AT5G17020"/>
</dbReference>
<dbReference type="Gramene" id="AT5G17020.2">
    <molecule id="Q9SMV6-2"/>
    <property type="protein sequence ID" value="AT5G17020.2"/>
    <property type="gene ID" value="AT5G17020"/>
</dbReference>
<dbReference type="KEGG" id="ath:AT5G17020"/>
<dbReference type="Araport" id="AT5G17020"/>
<dbReference type="TAIR" id="AT5G17020">
    <property type="gene designation" value="XPO1A"/>
</dbReference>
<dbReference type="eggNOG" id="KOG2020">
    <property type="taxonomic scope" value="Eukaryota"/>
</dbReference>
<dbReference type="HOGENOM" id="CLU_011906_0_0_1"/>
<dbReference type="InParanoid" id="Q9SMV6"/>
<dbReference type="OMA" id="WAFKHNN"/>
<dbReference type="OrthoDB" id="27218at2759"/>
<dbReference type="PhylomeDB" id="Q9SMV6"/>
<dbReference type="PRO" id="PR:Q9SMV6"/>
<dbReference type="Proteomes" id="UP000006548">
    <property type="component" value="Chromosome 5"/>
</dbReference>
<dbReference type="ExpressionAtlas" id="Q9SMV6">
    <property type="expression patterns" value="baseline and differential"/>
</dbReference>
<dbReference type="GO" id="GO:0031965">
    <property type="term" value="C:nuclear membrane"/>
    <property type="evidence" value="ECO:0007669"/>
    <property type="project" value="UniProtKB-SubCell"/>
</dbReference>
<dbReference type="GO" id="GO:0005643">
    <property type="term" value="C:nuclear pore"/>
    <property type="evidence" value="ECO:0007669"/>
    <property type="project" value="UniProtKB-SubCell"/>
</dbReference>
<dbReference type="GO" id="GO:0005634">
    <property type="term" value="C:nucleus"/>
    <property type="evidence" value="ECO:0000304"/>
    <property type="project" value="TAIR"/>
</dbReference>
<dbReference type="GO" id="GO:0005049">
    <property type="term" value="F:nuclear export signal receptor activity"/>
    <property type="evidence" value="ECO:0007669"/>
    <property type="project" value="InterPro"/>
</dbReference>
<dbReference type="GO" id="GO:0031267">
    <property type="term" value="F:small GTPase binding"/>
    <property type="evidence" value="ECO:0007669"/>
    <property type="project" value="InterPro"/>
</dbReference>
<dbReference type="GO" id="GO:0009553">
    <property type="term" value="P:embryo sac development"/>
    <property type="evidence" value="ECO:0000316"/>
    <property type="project" value="TAIR"/>
</dbReference>
<dbReference type="GO" id="GO:0051028">
    <property type="term" value="P:mRNA transport"/>
    <property type="evidence" value="ECO:0007669"/>
    <property type="project" value="UniProtKB-KW"/>
</dbReference>
<dbReference type="GO" id="GO:0009555">
    <property type="term" value="P:pollen development"/>
    <property type="evidence" value="ECO:0000316"/>
    <property type="project" value="TAIR"/>
</dbReference>
<dbReference type="GO" id="GO:0009846">
    <property type="term" value="P:pollen germination"/>
    <property type="evidence" value="ECO:0000316"/>
    <property type="project" value="TAIR"/>
</dbReference>
<dbReference type="GO" id="GO:0009860">
    <property type="term" value="P:pollen tube growth"/>
    <property type="evidence" value="ECO:0000316"/>
    <property type="project" value="TAIR"/>
</dbReference>
<dbReference type="GO" id="GO:0006611">
    <property type="term" value="P:protein export from nucleus"/>
    <property type="evidence" value="ECO:0000250"/>
    <property type="project" value="TAIR"/>
</dbReference>
<dbReference type="GO" id="GO:0009408">
    <property type="term" value="P:response to heat"/>
    <property type="evidence" value="ECO:0000315"/>
    <property type="project" value="UniProtKB"/>
</dbReference>
<dbReference type="FunFam" id="1.25.10.10:FF:000022">
    <property type="entry name" value="protein EXPORTIN 1A"/>
    <property type="match status" value="1"/>
</dbReference>
<dbReference type="Gene3D" id="1.25.10.10">
    <property type="entry name" value="Leucine-rich Repeat Variant"/>
    <property type="match status" value="1"/>
</dbReference>
<dbReference type="InterPro" id="IPR011989">
    <property type="entry name" value="ARM-like"/>
</dbReference>
<dbReference type="InterPro" id="IPR016024">
    <property type="entry name" value="ARM-type_fold"/>
</dbReference>
<dbReference type="InterPro" id="IPR041123">
    <property type="entry name" value="CRM1_repeat"/>
</dbReference>
<dbReference type="InterPro" id="IPR041235">
    <property type="entry name" value="Exp1_repeat_2"/>
</dbReference>
<dbReference type="InterPro" id="IPR013598">
    <property type="entry name" value="Exportin-1/Importin-b-like"/>
</dbReference>
<dbReference type="InterPro" id="IPR001494">
    <property type="entry name" value="Importin-beta_N"/>
</dbReference>
<dbReference type="InterPro" id="IPR045065">
    <property type="entry name" value="XPO1/5"/>
</dbReference>
<dbReference type="InterPro" id="IPR014877">
    <property type="entry name" value="XPO1_C_dom"/>
</dbReference>
<dbReference type="InterPro" id="IPR040485">
    <property type="entry name" value="XPO1_repeat_3"/>
</dbReference>
<dbReference type="PANTHER" id="PTHR11223">
    <property type="entry name" value="EXPORTIN 1/5"/>
    <property type="match status" value="1"/>
</dbReference>
<dbReference type="PANTHER" id="PTHR11223:SF2">
    <property type="entry name" value="EXPORTIN-1"/>
    <property type="match status" value="1"/>
</dbReference>
<dbReference type="Pfam" id="PF08767">
    <property type="entry name" value="CRM1_C"/>
    <property type="match status" value="1"/>
</dbReference>
<dbReference type="Pfam" id="PF18777">
    <property type="entry name" value="CRM1_repeat"/>
    <property type="match status" value="1"/>
</dbReference>
<dbReference type="Pfam" id="PF18784">
    <property type="entry name" value="CRM1_repeat_2"/>
    <property type="match status" value="1"/>
</dbReference>
<dbReference type="Pfam" id="PF18787">
    <property type="entry name" value="CRM1_repeat_3"/>
    <property type="match status" value="1"/>
</dbReference>
<dbReference type="Pfam" id="PF03810">
    <property type="entry name" value="IBN_N"/>
    <property type="match status" value="1"/>
</dbReference>
<dbReference type="Pfam" id="PF08389">
    <property type="entry name" value="Xpo1"/>
    <property type="match status" value="1"/>
</dbReference>
<dbReference type="SMART" id="SM01102">
    <property type="entry name" value="CRM1_C"/>
    <property type="match status" value="1"/>
</dbReference>
<dbReference type="SMART" id="SM00913">
    <property type="entry name" value="IBN_N"/>
    <property type="match status" value="1"/>
</dbReference>
<dbReference type="SUPFAM" id="SSF48371">
    <property type="entry name" value="ARM repeat"/>
    <property type="match status" value="1"/>
</dbReference>
<dbReference type="PROSITE" id="PS50166">
    <property type="entry name" value="IMPORTIN_B_NT"/>
    <property type="match status" value="1"/>
</dbReference>
<accession>Q9SMV6</accession>
<accession>F4KFL2</accession>
<organism evidence="13">
    <name type="scientific">Arabidopsis thaliana</name>
    <name type="common">Mouse-ear cress</name>
    <dbReference type="NCBI Taxonomy" id="3702"/>
    <lineage>
        <taxon>Eukaryota</taxon>
        <taxon>Viridiplantae</taxon>
        <taxon>Streptophyta</taxon>
        <taxon>Embryophyta</taxon>
        <taxon>Tracheophyta</taxon>
        <taxon>Spermatophyta</taxon>
        <taxon>Magnoliopsida</taxon>
        <taxon>eudicotyledons</taxon>
        <taxon>Gunneridae</taxon>
        <taxon>Pentapetalae</taxon>
        <taxon>rosids</taxon>
        <taxon>malvids</taxon>
        <taxon>Brassicales</taxon>
        <taxon>Brassicaceae</taxon>
        <taxon>Camelineae</taxon>
        <taxon>Arabidopsis</taxon>
    </lineage>
</organism>
<reference key="1">
    <citation type="journal article" date="1999" name="Plant J.">
        <title>Nuclear export of proteins in plants: AtXPO1 is the export receptor for leucine-rich nuclear export signals in Arabidopsis thaliana.</title>
        <authorList>
            <person name="Haasen D."/>
            <person name="Koehler C."/>
            <person name="Neuhaus G."/>
            <person name="Merkle T."/>
        </authorList>
    </citation>
    <scope>NUCLEOTIDE SEQUENCE [GENOMIC DNA / MRNA]</scope>
    <scope>FUNCTION</scope>
    <scope>INTERACTION WITH RAN1</scope>
    <scope>TISSUE SPECIFICITY</scope>
    <source>
        <strain>cv. Columbia</strain>
    </source>
</reference>
<reference key="2">
    <citation type="online journal article" date="1999" name="Plant Gene Register">
        <title>Isolation and sequence analysis of a genomic clone of the nuclear export receptor AtXPO1 (AtCRM1) from Arabidopsis thaliana.</title>
        <authorList>
            <person name="Haasen D."/>
            <person name="Neuhaus G."/>
            <person name="Merkle T."/>
        </authorList>
        <locator>PGR99-127</locator>
    </citation>
    <scope>NUCLEOTIDE SEQUENCE [GENOMIC DNA / MRNA]</scope>
    <source>
        <strain>cv. Columbia</strain>
        <tissue>Leaf</tissue>
        <tissue>Stem</tissue>
    </source>
</reference>
<reference key="3">
    <citation type="journal article" date="2000" name="Nature">
        <title>Sequence and analysis of chromosome 5 of the plant Arabidopsis thaliana.</title>
        <authorList>
            <person name="Tabata S."/>
            <person name="Kaneko T."/>
            <person name="Nakamura Y."/>
            <person name="Kotani H."/>
            <person name="Kato T."/>
            <person name="Asamizu E."/>
            <person name="Miyajima N."/>
            <person name="Sasamoto S."/>
            <person name="Kimura T."/>
            <person name="Hosouchi T."/>
            <person name="Kawashima K."/>
            <person name="Kohara M."/>
            <person name="Matsumoto M."/>
            <person name="Matsuno A."/>
            <person name="Muraki A."/>
            <person name="Nakayama S."/>
            <person name="Nakazaki N."/>
            <person name="Naruo K."/>
            <person name="Okumura S."/>
            <person name="Shinpo S."/>
            <person name="Takeuchi C."/>
            <person name="Wada T."/>
            <person name="Watanabe A."/>
            <person name="Yamada M."/>
            <person name="Yasuda M."/>
            <person name="Sato S."/>
            <person name="de la Bastide M."/>
            <person name="Huang E."/>
            <person name="Spiegel L."/>
            <person name="Gnoj L."/>
            <person name="O'Shaughnessy A."/>
            <person name="Preston R."/>
            <person name="Habermann K."/>
            <person name="Murray J."/>
            <person name="Johnson D."/>
            <person name="Rohlfing T."/>
            <person name="Nelson J."/>
            <person name="Stoneking T."/>
            <person name="Pepin K."/>
            <person name="Spieth J."/>
            <person name="Sekhon M."/>
            <person name="Armstrong J."/>
            <person name="Becker M."/>
            <person name="Belter E."/>
            <person name="Cordum H."/>
            <person name="Cordes M."/>
            <person name="Courtney L."/>
            <person name="Courtney W."/>
            <person name="Dante M."/>
            <person name="Du H."/>
            <person name="Edwards J."/>
            <person name="Fryman J."/>
            <person name="Haakensen B."/>
            <person name="Lamar E."/>
            <person name="Latreille P."/>
            <person name="Leonard S."/>
            <person name="Meyer R."/>
            <person name="Mulvaney E."/>
            <person name="Ozersky P."/>
            <person name="Riley A."/>
            <person name="Strowmatt C."/>
            <person name="Wagner-McPherson C."/>
            <person name="Wollam A."/>
            <person name="Yoakum M."/>
            <person name="Bell M."/>
            <person name="Dedhia N."/>
            <person name="Parnell L."/>
            <person name="Shah R."/>
            <person name="Rodriguez M."/>
            <person name="Hoon See L."/>
            <person name="Vil D."/>
            <person name="Baker J."/>
            <person name="Kirchoff K."/>
            <person name="Toth K."/>
            <person name="King L."/>
            <person name="Bahret A."/>
            <person name="Miller B."/>
            <person name="Marra M.A."/>
            <person name="Martienssen R."/>
            <person name="McCombie W.R."/>
            <person name="Wilson R.K."/>
            <person name="Murphy G."/>
            <person name="Bancroft I."/>
            <person name="Volckaert G."/>
            <person name="Wambutt R."/>
            <person name="Duesterhoeft A."/>
            <person name="Stiekema W."/>
            <person name="Pohl T."/>
            <person name="Entian K.-D."/>
            <person name="Terryn N."/>
            <person name="Hartley N."/>
            <person name="Bent E."/>
            <person name="Johnson S."/>
            <person name="Langham S.-A."/>
            <person name="McCullagh B."/>
            <person name="Robben J."/>
            <person name="Grymonprez B."/>
            <person name="Zimmermann W."/>
            <person name="Ramsperger U."/>
            <person name="Wedler H."/>
            <person name="Balke K."/>
            <person name="Wedler E."/>
            <person name="Peters S."/>
            <person name="van Staveren M."/>
            <person name="Dirkse W."/>
            <person name="Mooijman P."/>
            <person name="Klein Lankhorst R."/>
            <person name="Weitzenegger T."/>
            <person name="Bothe G."/>
            <person name="Rose M."/>
            <person name="Hauf J."/>
            <person name="Berneiser S."/>
            <person name="Hempel S."/>
            <person name="Feldpausch M."/>
            <person name="Lamberth S."/>
            <person name="Villarroel R."/>
            <person name="Gielen J."/>
            <person name="Ardiles W."/>
            <person name="Bents O."/>
            <person name="Lemcke K."/>
            <person name="Kolesov G."/>
            <person name="Mayer K.F.X."/>
            <person name="Rudd S."/>
            <person name="Schoof H."/>
            <person name="Schueller C."/>
            <person name="Zaccaria P."/>
            <person name="Mewes H.-W."/>
            <person name="Bevan M."/>
            <person name="Fransz P.F."/>
        </authorList>
    </citation>
    <scope>NUCLEOTIDE SEQUENCE [LARGE SCALE GENOMIC DNA]</scope>
    <source>
        <strain>cv. Columbia</strain>
    </source>
</reference>
<reference key="4">
    <citation type="journal article" date="2017" name="Plant J.">
        <title>Araport11: a complete reannotation of the Arabidopsis thaliana reference genome.</title>
        <authorList>
            <person name="Cheng C.Y."/>
            <person name="Krishnakumar V."/>
            <person name="Chan A.P."/>
            <person name="Thibaud-Nissen F."/>
            <person name="Schobel S."/>
            <person name="Town C.D."/>
        </authorList>
    </citation>
    <scope>GENOME REANNOTATION</scope>
    <source>
        <strain>cv. Columbia</strain>
    </source>
</reference>
<reference key="5">
    <citation type="journal article" date="2003" name="Science">
        <title>Empirical analysis of transcriptional activity in the Arabidopsis genome.</title>
        <authorList>
            <person name="Yamada K."/>
            <person name="Lim J."/>
            <person name="Dale J.M."/>
            <person name="Chen H."/>
            <person name="Shinn P."/>
            <person name="Palm C.J."/>
            <person name="Southwick A.M."/>
            <person name="Wu H.C."/>
            <person name="Kim C.J."/>
            <person name="Nguyen M."/>
            <person name="Pham P.K."/>
            <person name="Cheuk R.F."/>
            <person name="Karlin-Newmann G."/>
            <person name="Liu S.X."/>
            <person name="Lam B."/>
            <person name="Sakano H."/>
            <person name="Wu T."/>
            <person name="Yu G."/>
            <person name="Miranda M."/>
            <person name="Quach H.L."/>
            <person name="Tripp M."/>
            <person name="Chang C.H."/>
            <person name="Lee J.M."/>
            <person name="Toriumi M.J."/>
            <person name="Chan M.M."/>
            <person name="Tang C.C."/>
            <person name="Onodera C.S."/>
            <person name="Deng J.M."/>
            <person name="Akiyama K."/>
            <person name="Ansari Y."/>
            <person name="Arakawa T."/>
            <person name="Banh J."/>
            <person name="Banno F."/>
            <person name="Bowser L."/>
            <person name="Brooks S.Y."/>
            <person name="Carninci P."/>
            <person name="Chao Q."/>
            <person name="Choy N."/>
            <person name="Enju A."/>
            <person name="Goldsmith A.D."/>
            <person name="Gurjal M."/>
            <person name="Hansen N.F."/>
            <person name="Hayashizaki Y."/>
            <person name="Johnson-Hopson C."/>
            <person name="Hsuan V.W."/>
            <person name="Iida K."/>
            <person name="Karnes M."/>
            <person name="Khan S."/>
            <person name="Koesema E."/>
            <person name="Ishida J."/>
            <person name="Jiang P.X."/>
            <person name="Jones T."/>
            <person name="Kawai J."/>
            <person name="Kamiya A."/>
            <person name="Meyers C."/>
            <person name="Nakajima M."/>
            <person name="Narusaka M."/>
            <person name="Seki M."/>
            <person name="Sakurai T."/>
            <person name="Satou M."/>
            <person name="Tamse R."/>
            <person name="Vaysberg M."/>
            <person name="Wallender E.K."/>
            <person name="Wong C."/>
            <person name="Yamamura Y."/>
            <person name="Yuan S."/>
            <person name="Shinozaki K."/>
            <person name="Davis R.W."/>
            <person name="Theologis A."/>
            <person name="Ecker J.R."/>
        </authorList>
    </citation>
    <scope>NUCLEOTIDE SEQUENCE [LARGE SCALE MRNA]</scope>
    <source>
        <strain>cv. Columbia</strain>
    </source>
</reference>
<reference key="6">
    <citation type="journal article" date="2006" name="Plant Physiol.">
        <title>Analysis of the subcellular localization, function, and proteolytic control of the Arabidopsis cyclin-dependent kinase inhibitor ICK1/KRP1.</title>
        <authorList>
            <person name="Jakoby M.J."/>
            <person name="Weinl C."/>
            <person name="Pusch S."/>
            <person name="Kuijt S.J.H."/>
            <person name="Merkle T."/>
            <person name="Dissmeyer N."/>
            <person name="Schnittger A."/>
        </authorList>
    </citation>
    <scope>FUNCTION</scope>
</reference>
<reference key="7">
    <citation type="journal article" date="2008" name="Genetics">
        <title>Exportin1 genes are essential for development and function of the gametophytes in Arabidopsis thaliana.</title>
        <authorList>
            <person name="Blanvillain R."/>
            <person name="Boavida L.C."/>
            <person name="McCormick S."/>
            <person name="Ow D.W."/>
        </authorList>
    </citation>
    <scope>FUNCTION</scope>
    <scope>DISRUPTION PHENOTYPE</scope>
    <scope>TISSUE SPECIFICITY</scope>
</reference>
<reference key="8">
    <citation type="journal article" date="2010" name="New Phytol.">
        <title>Isolation and characterization of the Arabidopsis heat-intolerant 2 (hit2) mutant reveal the essential role of the nuclear export receptor EXPORTIN1A (XPO1A) in plant heat tolerance.</title>
        <authorList>
            <person name="Wu S.-J."/>
            <person name="Wang L.-C."/>
            <person name="Yeh C.-H."/>
            <person name="Lu C.-A."/>
            <person name="Wu S.-J."/>
        </authorList>
    </citation>
    <scope>FUNCTION</scope>
    <scope>DISRUPTION PHENOTYPE</scope>
    <scope>TISSUE SPECIFICITY</scope>
    <source>
        <strain>cv. Columbia</strain>
    </source>
</reference>
<protein>
    <recommendedName>
        <fullName evidence="9">Protein EXPORTIN 1A</fullName>
        <shortName evidence="8">AtCRM1</shortName>
        <shortName evidence="8">AtXPO1</shortName>
    </recommendedName>
    <alternativeName>
        <fullName evidence="10">Protein HEAT-INTOLERANT 2</fullName>
    </alternativeName>
</protein>
<keyword id="KW-0025">Alternative splicing</keyword>
<keyword id="KW-0217">Developmental protein</keyword>
<keyword id="KW-0472">Membrane</keyword>
<keyword id="KW-0509">mRNA transport</keyword>
<keyword id="KW-0906">Nuclear pore complex</keyword>
<keyword id="KW-0539">Nucleus</keyword>
<keyword id="KW-0653">Protein transport</keyword>
<keyword id="KW-1185">Reference proteome</keyword>
<keyword id="KW-0677">Repeat</keyword>
<keyword id="KW-0811">Translocation</keyword>
<keyword id="KW-0813">Transport</keyword>
<feature type="chain" id="PRO_0000432145" description="Protein EXPORTIN 1A">
    <location>
        <begin position="1"/>
        <end position="1075"/>
    </location>
</feature>
<feature type="domain" description="Importin N-terminal" evidence="3">
    <location>
        <begin position="37"/>
        <end position="103"/>
    </location>
</feature>
<feature type="repeat" description="HEAT 1" evidence="2">
    <location>
        <begin position="91"/>
        <end position="130"/>
    </location>
</feature>
<feature type="repeat" description="HEAT 2" evidence="2">
    <location>
        <begin position="135"/>
        <end position="171"/>
    </location>
</feature>
<feature type="repeat" description="HEAT 3" evidence="2">
    <location>
        <begin position="232"/>
        <end position="267"/>
    </location>
</feature>
<feature type="repeat" description="HEAT 4" evidence="2">
    <location>
        <begin position="336"/>
        <end position="373"/>
    </location>
</feature>
<feature type="repeat" description="HEAT 5" evidence="2">
    <location>
        <begin position="388"/>
        <end position="425"/>
    </location>
</feature>
<feature type="repeat" description="HEAT 6" evidence="2">
    <location>
        <begin position="474"/>
        <end position="513"/>
    </location>
</feature>
<feature type="repeat" description="HEAT 7" evidence="2">
    <location>
        <begin position="563"/>
        <end position="600"/>
    </location>
</feature>
<feature type="repeat" description="HEAT 8" evidence="2">
    <location>
        <begin position="612"/>
        <end position="649"/>
    </location>
</feature>
<feature type="repeat" description="HEAT 9" evidence="2">
    <location>
        <begin position="682"/>
        <end position="719"/>
    </location>
</feature>
<feature type="repeat" description="HEAT 10" evidence="2">
    <location>
        <begin position="756"/>
        <end position="793"/>
    </location>
</feature>
<feature type="repeat" description="HEAT 11" evidence="2">
    <location>
        <begin position="798"/>
        <end position="835"/>
    </location>
</feature>
<feature type="repeat" description="HEAT 12" evidence="2">
    <location>
        <begin position="894"/>
        <end position="934"/>
    </location>
</feature>
<feature type="splice variant" id="VSP_057489" description="In isoform 2." evidence="11">
    <location>
        <begin position="308"/>
        <end position="322"/>
    </location>
</feature>
<proteinExistence type="evidence at protein level"/>
<evidence type="ECO:0000250" key="1">
    <source>
        <dbReference type="UniProtKB" id="Q9TVM2"/>
    </source>
</evidence>
<evidence type="ECO:0000255" key="2"/>
<evidence type="ECO:0000255" key="3">
    <source>
        <dbReference type="PROSITE-ProRule" id="PRU00115"/>
    </source>
</evidence>
<evidence type="ECO:0000269" key="4">
    <source>
    </source>
</evidence>
<evidence type="ECO:0000269" key="5">
    <source>
    </source>
</evidence>
<evidence type="ECO:0000269" key="6">
    <source>
    </source>
</evidence>
<evidence type="ECO:0000269" key="7">
    <source>
    </source>
</evidence>
<evidence type="ECO:0000303" key="8">
    <source>
    </source>
</evidence>
<evidence type="ECO:0000303" key="9">
    <source>
    </source>
</evidence>
<evidence type="ECO:0000303" key="10">
    <source>
    </source>
</evidence>
<evidence type="ECO:0000305" key="11"/>
<evidence type="ECO:0000312" key="12">
    <source>
        <dbReference type="Araport" id="AT5G17020"/>
    </source>
</evidence>
<evidence type="ECO:0000312" key="13">
    <source>
        <dbReference type="EMBL" id="CAB56597.1"/>
    </source>
</evidence>
<evidence type="ECO:0000312" key="14">
    <source>
        <dbReference type="EMBL" id="CAC01715.1"/>
    </source>
</evidence>
<sequence length="1075" mass="123243">MAAEKLRDLSQPIDVGVLDATVAAFFVTGSKEERAAADQILRDLQANPDMWLQVVHILQNTNSLDTKFFALQVLEGVIKYRWNALPVEQRDGMKNYISEVIVQLSSNEASFRSERLYVNKLNVILVQIVKHDWPAKWTSFIPDLVAAAKTSETICENCMAILKLLSEEVFDFSRGEMTQQKIKELKQSLNSEFKLIHELCLYVLSASQRQDLIRATLSALHAYLSWIPLGYIFESTLLETLLKFFPVPAYRNLTIQCLTEVAALNFGDFYNVQYVKMYTIFIGQLRIILPPSTKIPEAYSSGSGEEQAFIQNLALFFTSFFKFHIRVLESTPEVVSLLLAGLEYLINISYVDDTEVFKVCLDYWNSLVLELFDAHHNSDNPAVSASLMGLQPFLPGMVDGLGSQVMQRRQLYSHPMSKLRGLMINRMAKPEEVLIVEDENGNIVRETMKDNDVLVQYKIMRETLIYLSHLDHDDTEKQMLRKLNKQLSGEEWAWNNLNTLCWAIGSISGSMAEDQENRFLVMVIRDLLNLCEITKGKDNKAVIASNIMYVVGQYPRFLRAHWKFLKTVVNKLFEFMHETHPGVQDMACDTFLKIVQKCKRKFVIVQVGENEPFVSELLTGLATTVQDLEPHQIHSFYESVGNMIQAESDPQKRDEYLQRLMALPNQKWAEIIGQARHSVEFLKDQVVIRTVLNILQTNTSAATSLGTYFLSQISLIFLDMLNVYRMYSELVSTNITEGGPYASKTSFVKLLRSVKRETLKLIETFLDKAEDQPHIGKQFVPPMMESVLGDYARNVPDARESEVLSLFATIINKYKATMLDDVPHIFEAVFQCTLEMITKNFEDYPEHRLKFFSLLRAIATFCFPALIKLSSPQLKLVMDSIIWAFRHTERNIAETGLNLLLEMLKNFQQSEFCNQFYRSYFMQIEQEIFAVLTDTFHKPGFKLHVLVLQQLFCLPESGALTEPLWDATTVPYPYPDNVAFVREYTIKLLSSSFPNMTAAEVTQFVNGLYESRNDPSGFKNNIRDFLVQSKEFSAQDNKDLYAEEAAAQRERERQRMLSIPGLIAPNEIQDEMVDS</sequence>
<name>XPO1A_ARATH</name>
<gene>
    <name evidence="8" type="primary">XPO1</name>
    <name evidence="10" type="synonym">HIT2</name>
    <name evidence="9" type="synonym">XPO1A</name>
    <name evidence="12" type="ordered locus">At5g17020</name>
    <name evidence="14" type="ORF">F2K13.170</name>
</gene>